<proteinExistence type="evidence at transcript level"/>
<organism>
    <name type="scientific">Citrus sinensis</name>
    <name type="common">Sweet orange</name>
    <name type="synonym">Citrus aurantium var. sinensis</name>
    <dbReference type="NCBI Taxonomy" id="2711"/>
    <lineage>
        <taxon>Eukaryota</taxon>
        <taxon>Viridiplantae</taxon>
        <taxon>Streptophyta</taxon>
        <taxon>Embryophyta</taxon>
        <taxon>Tracheophyta</taxon>
        <taxon>Spermatophyta</taxon>
        <taxon>Magnoliopsida</taxon>
        <taxon>eudicotyledons</taxon>
        <taxon>Gunneridae</taxon>
        <taxon>Pentapetalae</taxon>
        <taxon>rosids</taxon>
        <taxon>malvids</taxon>
        <taxon>Sapindales</taxon>
        <taxon>Rutaceae</taxon>
        <taxon>Aurantioideae</taxon>
        <taxon>Citrus</taxon>
    </lineage>
</organism>
<comment type="function">
    <text>The primary product of this enzyme is 4,2',4',6'-tetrahydroxychalcone (also termed naringenin-chalcone or chalcone) which can under specific conditions spontaneously isomerize into naringenin.</text>
</comment>
<comment type="catalytic activity">
    <reaction evidence="1">
        <text>(E)-4-coumaroyl-CoA + 3 malonyl-CoA + 3 H(+) = 2',4,4',6'-tetrahydroxychalcone + 3 CO2 + 4 CoA</text>
        <dbReference type="Rhea" id="RHEA:11128"/>
        <dbReference type="ChEBI" id="CHEBI:15378"/>
        <dbReference type="ChEBI" id="CHEBI:15413"/>
        <dbReference type="ChEBI" id="CHEBI:16526"/>
        <dbReference type="ChEBI" id="CHEBI:57287"/>
        <dbReference type="ChEBI" id="CHEBI:57384"/>
        <dbReference type="ChEBI" id="CHEBI:85008"/>
        <dbReference type="EC" id="2.3.1.74"/>
    </reaction>
</comment>
<comment type="pathway">
    <text>Secondary metabolite biosynthesis; flavonoid biosynthesis.</text>
</comment>
<comment type="similarity">
    <text evidence="2">Belongs to the thiolase-like superfamily. Chalcone/stilbene synthases family.</text>
</comment>
<reference key="1">
    <citation type="journal article" date="1999" name="Plant Cell Physiol.">
        <title>One type of chalcone synthase gene expressed during embryogenesis regulates the flavonoid accumulation in citrus cell cultures.</title>
        <authorList>
            <person name="Moriguchi T."/>
            <person name="Kita M."/>
            <person name="Tomono Y."/>
            <person name="Endo-Inagaki T."/>
            <person name="Omura M."/>
        </authorList>
    </citation>
    <scope>NUCLEOTIDE SEQUENCE [MRNA]</scope>
</reference>
<feature type="chain" id="PRO_0000215969" description="Chalcone synthase 2">
    <location>
        <begin position="1"/>
        <end position="391"/>
    </location>
</feature>
<feature type="active site" evidence="1">
    <location>
        <position position="164"/>
    </location>
</feature>
<sequence length="391" mass="42592">MATVQEIRNAQRADGPATVLAIGTATPAHSVNQADYPDYYFRITKSEHMTELKEKFKRMCDKSMIKKRYMYLTEEILKENPNMCAYMAPSLDARQDIVVVEVPKLGKEAATKAIKEWGQPKSKITHLIFCTTSGVDMPGADYQLTKLIGLRPSVKRFMMYQQGCFAGGTVLRLAKDLAENNKGARVLVVCSEITAVTFRGPADTHLDSLVGQALFGDGAAAVIVGADPDTSVERPLYQLVSTSQTILPDSDGAIDGHLREVGLTFHLLKDVPGLISKNIEKSLSEAFAPLGISDWNSIFWIAHPGGPAILDQVESKLGLKGEKLKATRQVLSEYGNMSSACVLFILDEMRKKSVEEAKATTGEGLDWGVLFGFGPGLTVETVVLHSVPIKA</sequence>
<evidence type="ECO:0000255" key="1">
    <source>
        <dbReference type="PROSITE-ProRule" id="PRU10023"/>
    </source>
</evidence>
<evidence type="ECO:0000305" key="2"/>
<accession>Q9XJ57</accession>
<gene>
    <name type="primary">CHS2</name>
</gene>
<name>CHS2_CITSI</name>
<protein>
    <recommendedName>
        <fullName>Chalcone synthase 2</fullName>
        <ecNumber>2.3.1.74</ecNumber>
    </recommendedName>
    <alternativeName>
        <fullName>Naringenin-chalcone synthase 2</fullName>
    </alternativeName>
</protein>
<dbReference type="EC" id="2.3.1.74"/>
<dbReference type="EMBL" id="AB009351">
    <property type="protein sequence ID" value="BAA81664.1"/>
    <property type="molecule type" value="mRNA"/>
</dbReference>
<dbReference type="RefSeq" id="NP_001306986.1">
    <property type="nucleotide sequence ID" value="NM_001320057.1"/>
</dbReference>
<dbReference type="SMR" id="Q9XJ57"/>
<dbReference type="PaxDb" id="2711-XP_006468926.1"/>
<dbReference type="GeneID" id="102607309"/>
<dbReference type="KEGG" id="cit:102607309"/>
<dbReference type="eggNOG" id="ENOG502QRSY">
    <property type="taxonomic scope" value="Eukaryota"/>
</dbReference>
<dbReference type="OrthoDB" id="855490at71240"/>
<dbReference type="UniPathway" id="UPA00154"/>
<dbReference type="GO" id="GO:0016210">
    <property type="term" value="F:naringenin-chalcone synthase activity"/>
    <property type="evidence" value="ECO:0007669"/>
    <property type="project" value="UniProtKB-EC"/>
</dbReference>
<dbReference type="GO" id="GO:0009813">
    <property type="term" value="P:flavonoid biosynthetic process"/>
    <property type="evidence" value="ECO:0007669"/>
    <property type="project" value="UniProtKB-UniPathway"/>
</dbReference>
<dbReference type="CDD" id="cd00831">
    <property type="entry name" value="CHS_like"/>
    <property type="match status" value="1"/>
</dbReference>
<dbReference type="FunFam" id="3.40.47.10:FF:000014">
    <property type="entry name" value="Chalcone synthase 1"/>
    <property type="match status" value="1"/>
</dbReference>
<dbReference type="FunFam" id="3.40.47.10:FF:000025">
    <property type="entry name" value="Chalcone synthase 2"/>
    <property type="match status" value="1"/>
</dbReference>
<dbReference type="Gene3D" id="3.40.47.10">
    <property type="match status" value="2"/>
</dbReference>
<dbReference type="InterPro" id="IPR012328">
    <property type="entry name" value="Chalcone/stilbene_synt_C"/>
</dbReference>
<dbReference type="InterPro" id="IPR001099">
    <property type="entry name" value="Chalcone/stilbene_synt_N"/>
</dbReference>
<dbReference type="InterPro" id="IPR018088">
    <property type="entry name" value="Chalcone/stilbene_synthase_AS"/>
</dbReference>
<dbReference type="InterPro" id="IPR011141">
    <property type="entry name" value="Polyketide_synthase_type-III"/>
</dbReference>
<dbReference type="InterPro" id="IPR016039">
    <property type="entry name" value="Thiolase-like"/>
</dbReference>
<dbReference type="PANTHER" id="PTHR11877:SF14">
    <property type="entry name" value="CHALCONE SYNTHASE"/>
    <property type="match status" value="1"/>
</dbReference>
<dbReference type="PANTHER" id="PTHR11877">
    <property type="entry name" value="HYDROXYMETHYLGLUTARYL-COA SYNTHASE"/>
    <property type="match status" value="1"/>
</dbReference>
<dbReference type="Pfam" id="PF02797">
    <property type="entry name" value="Chal_sti_synt_C"/>
    <property type="match status" value="1"/>
</dbReference>
<dbReference type="Pfam" id="PF00195">
    <property type="entry name" value="Chal_sti_synt_N"/>
    <property type="match status" value="1"/>
</dbReference>
<dbReference type="PIRSF" id="PIRSF000451">
    <property type="entry name" value="PKS_III"/>
    <property type="match status" value="1"/>
</dbReference>
<dbReference type="SUPFAM" id="SSF53901">
    <property type="entry name" value="Thiolase-like"/>
    <property type="match status" value="2"/>
</dbReference>
<dbReference type="PROSITE" id="PS00441">
    <property type="entry name" value="CHALCONE_SYNTH"/>
    <property type="match status" value="1"/>
</dbReference>
<keyword id="KW-0012">Acyltransferase</keyword>
<keyword id="KW-0284">Flavonoid biosynthesis</keyword>
<keyword id="KW-0808">Transferase</keyword>